<dbReference type="EMBL" id="BX950229">
    <property type="protein sequence ID" value="CAF31101.1"/>
    <property type="molecule type" value="Genomic_DNA"/>
</dbReference>
<dbReference type="RefSeq" id="WP_011171489.1">
    <property type="nucleotide sequence ID" value="NC_005791.1"/>
</dbReference>
<dbReference type="SMR" id="Q6LX09"/>
<dbReference type="STRING" id="267377.MMP1545"/>
<dbReference type="EnsemblBacteria" id="CAF31101">
    <property type="protein sequence ID" value="CAF31101"/>
    <property type="gene ID" value="MMP1545"/>
</dbReference>
<dbReference type="KEGG" id="mmp:MMP1545"/>
<dbReference type="PATRIC" id="fig|267377.15.peg.1582"/>
<dbReference type="eggNOG" id="arCOG04072">
    <property type="taxonomic scope" value="Archaea"/>
</dbReference>
<dbReference type="HOGENOM" id="CLU_037562_4_2_2"/>
<dbReference type="OrthoDB" id="7751at2157"/>
<dbReference type="Proteomes" id="UP000000590">
    <property type="component" value="Chromosome"/>
</dbReference>
<dbReference type="GO" id="GO:1990904">
    <property type="term" value="C:ribonucleoprotein complex"/>
    <property type="evidence" value="ECO:0007669"/>
    <property type="project" value="UniProtKB-KW"/>
</dbReference>
<dbReference type="GO" id="GO:0005840">
    <property type="term" value="C:ribosome"/>
    <property type="evidence" value="ECO:0007669"/>
    <property type="project" value="UniProtKB-KW"/>
</dbReference>
<dbReference type="GO" id="GO:0019843">
    <property type="term" value="F:rRNA binding"/>
    <property type="evidence" value="ECO:0007669"/>
    <property type="project" value="UniProtKB-UniRule"/>
</dbReference>
<dbReference type="GO" id="GO:0003735">
    <property type="term" value="F:structural constituent of ribosome"/>
    <property type="evidence" value="ECO:0007669"/>
    <property type="project" value="InterPro"/>
</dbReference>
<dbReference type="GO" id="GO:0006412">
    <property type="term" value="P:translation"/>
    <property type="evidence" value="ECO:0007669"/>
    <property type="project" value="UniProtKB-UniRule"/>
</dbReference>
<dbReference type="FunFam" id="3.30.70.330:FF:000532">
    <property type="entry name" value="50S ribosomal protein L23"/>
    <property type="match status" value="1"/>
</dbReference>
<dbReference type="Gene3D" id="3.30.70.330">
    <property type="match status" value="1"/>
</dbReference>
<dbReference type="HAMAP" id="MF_01369_A">
    <property type="entry name" value="Ribosomal_uL23_A"/>
    <property type="match status" value="1"/>
</dbReference>
<dbReference type="HAMAP" id="MF_01369_B">
    <property type="entry name" value="Ribosomal_uL23_B"/>
    <property type="match status" value="1"/>
</dbReference>
<dbReference type="InterPro" id="IPR012677">
    <property type="entry name" value="Nucleotide-bd_a/b_plait_sf"/>
</dbReference>
<dbReference type="InterPro" id="IPR019985">
    <property type="entry name" value="Ribosomal_uL23"/>
</dbReference>
<dbReference type="InterPro" id="IPR013025">
    <property type="entry name" value="Ribosomal_uL23-like"/>
</dbReference>
<dbReference type="InterPro" id="IPR012678">
    <property type="entry name" value="Ribosomal_uL23/eL15/eS24_sf"/>
</dbReference>
<dbReference type="InterPro" id="IPR001014">
    <property type="entry name" value="Ribosomal_uL23_CS"/>
</dbReference>
<dbReference type="NCBIfam" id="NF011118">
    <property type="entry name" value="PRK14548.1"/>
    <property type="match status" value="1"/>
</dbReference>
<dbReference type="NCBIfam" id="TIGR03636">
    <property type="entry name" value="uL23_arch"/>
    <property type="match status" value="1"/>
</dbReference>
<dbReference type="PANTHER" id="PTHR11620">
    <property type="entry name" value="60S RIBOSOMAL PROTEIN L23A"/>
    <property type="match status" value="1"/>
</dbReference>
<dbReference type="Pfam" id="PF00276">
    <property type="entry name" value="Ribosomal_L23"/>
    <property type="match status" value="1"/>
</dbReference>
<dbReference type="SUPFAM" id="SSF54189">
    <property type="entry name" value="Ribosomal proteins S24e, L23 and L15e"/>
    <property type="match status" value="1"/>
</dbReference>
<dbReference type="PROSITE" id="PS00050">
    <property type="entry name" value="RIBOSOMAL_L23"/>
    <property type="match status" value="1"/>
</dbReference>
<feature type="chain" id="PRO_0000272942" description="Large ribosomal subunit protein uL23">
    <location>
        <begin position="1"/>
        <end position="86"/>
    </location>
</feature>
<comment type="function">
    <text evidence="1">Binds to 23S rRNA. One of the proteins that surrounds the polypeptide exit tunnel on the outside of the ribosome.</text>
</comment>
<comment type="subunit">
    <text evidence="1">Part of the 50S ribosomal subunit. Contacts protein L29.</text>
</comment>
<comment type="similarity">
    <text evidence="1">Belongs to the universal ribosomal protein uL23 family.</text>
</comment>
<reference key="1">
    <citation type="journal article" date="2004" name="J. Bacteriol.">
        <title>Complete genome sequence of the genetically tractable hydrogenotrophic methanogen Methanococcus maripaludis.</title>
        <authorList>
            <person name="Hendrickson E.L."/>
            <person name="Kaul R."/>
            <person name="Zhou Y."/>
            <person name="Bovee D."/>
            <person name="Chapman P."/>
            <person name="Chung J."/>
            <person name="Conway de Macario E."/>
            <person name="Dodsworth J.A."/>
            <person name="Gillett W."/>
            <person name="Graham D.E."/>
            <person name="Hackett M."/>
            <person name="Haydock A.K."/>
            <person name="Kang A."/>
            <person name="Land M.L."/>
            <person name="Levy R."/>
            <person name="Lie T.J."/>
            <person name="Major T.A."/>
            <person name="Moore B.C."/>
            <person name="Porat I."/>
            <person name="Palmeiri A."/>
            <person name="Rouse G."/>
            <person name="Saenphimmachak C."/>
            <person name="Soell D."/>
            <person name="Van Dien S."/>
            <person name="Wang T."/>
            <person name="Whitman W.B."/>
            <person name="Xia Q."/>
            <person name="Zhang Y."/>
            <person name="Larimer F.W."/>
            <person name="Olson M.V."/>
            <person name="Leigh J.A."/>
        </authorList>
    </citation>
    <scope>NUCLEOTIDE SEQUENCE [LARGE SCALE GENOMIC DNA]</scope>
    <source>
        <strain>DSM 14266 / JCM 13030 / NBRC 101832 / S2 / LL</strain>
    </source>
</reference>
<name>RL23_METMP</name>
<accession>Q6LX09</accession>
<gene>
    <name evidence="1" type="primary">rpl23</name>
    <name type="ordered locus">MMP1545</name>
</gene>
<sequence length="86" mass="9628">MDAFDVIKTPIVSEKTMKLIEEENRLVFYVERKATKADVRAAIKELFDAEVADINTSITPKGKKKAYITLKDEYNAGEVAASLGIY</sequence>
<keyword id="KW-1185">Reference proteome</keyword>
<keyword id="KW-0687">Ribonucleoprotein</keyword>
<keyword id="KW-0689">Ribosomal protein</keyword>
<keyword id="KW-0694">RNA-binding</keyword>
<keyword id="KW-0699">rRNA-binding</keyword>
<proteinExistence type="inferred from homology"/>
<organism>
    <name type="scientific">Methanococcus maripaludis (strain DSM 14266 / JCM 13030 / NBRC 101832 / S2 / LL)</name>
    <dbReference type="NCBI Taxonomy" id="267377"/>
    <lineage>
        <taxon>Archaea</taxon>
        <taxon>Methanobacteriati</taxon>
        <taxon>Methanobacteriota</taxon>
        <taxon>Methanomada group</taxon>
        <taxon>Methanococci</taxon>
        <taxon>Methanococcales</taxon>
        <taxon>Methanococcaceae</taxon>
        <taxon>Methanococcus</taxon>
    </lineage>
</organism>
<protein>
    <recommendedName>
        <fullName evidence="1">Large ribosomal subunit protein uL23</fullName>
    </recommendedName>
    <alternativeName>
        <fullName evidence="2">50S ribosomal protein L23</fullName>
    </alternativeName>
</protein>
<evidence type="ECO:0000255" key="1">
    <source>
        <dbReference type="HAMAP-Rule" id="MF_01369"/>
    </source>
</evidence>
<evidence type="ECO:0000305" key="2"/>